<name>ARBH_HHV8P</name>
<organismHost>
    <name type="scientific">Homo sapiens</name>
    <name type="common">Human</name>
    <dbReference type="NCBI Taxonomy" id="9606"/>
</organismHost>
<reference key="1">
    <citation type="journal article" date="1999" name="J. Virol.">
        <title>Identification of a spliced gene from Kaposi's sarcoma-associated herpesvirus encoding a protein with similarities to latent membrane proteins 1 and 2A of Epstein-Barr virus.</title>
        <authorList>
            <person name="Glenn M."/>
            <person name="Rainbow L."/>
            <person name="Aurade F."/>
            <person name="Davison A."/>
            <person name="Schulz T.F."/>
        </authorList>
    </citation>
    <scope>NUCLEOTIDE SEQUENCE [LARGE SCALE GENOMIC DNA]</scope>
</reference>
<reference key="2">
    <citation type="journal article" date="2006" name="J. Gen. Virol.">
        <title>Kaposi's sarcoma-associated herpesvirus immune modulation: an overview.</title>
        <authorList>
            <person name="Rezaee S.A.R."/>
            <person name="Cunningham C."/>
            <person name="Davison A.J."/>
            <person name="Blackbourn D.J."/>
        </authorList>
    </citation>
    <scope>NUCLEOTIDE SEQUENCE [LARGE SCALE GENOMIC DNA]</scope>
</reference>
<reference key="3">
    <citation type="journal article" date="1997" name="Proc. Natl. Acad. Sci. U.S.A.">
        <title>A Bcl-2 homolog encoded by Kaposi sarcoma-associated virus, human herpesvirus 8, inhibits apoptosis but does not heterodimerize with Bax or Bak.</title>
        <authorList>
            <person name="Cheng E.H."/>
            <person name="Nicholas J."/>
            <person name="Bellows D.S."/>
            <person name="Hayward G.S."/>
            <person name="Guo H.G."/>
            <person name="Reitz M.S."/>
            <person name="Hardwick J.M."/>
        </authorList>
    </citation>
    <scope>FUNCTION</scope>
</reference>
<reference key="4">
    <citation type="journal article" date="2010" name="J. Virol.">
        <title>GLTSCR2/PICT-1, a putative tumor suppressor gene product, induces the nucleolar targeting of the Kaposi's sarcoma-associated herpesvirus KS-Bcl-2 protein.</title>
        <authorList>
            <person name="Kalt I."/>
            <person name="Borodianskiy-Shteinberg T."/>
            <person name="Schachor A."/>
            <person name="Sarid R."/>
        </authorList>
    </citation>
    <scope>INTERACTION WITH HUMAN NOP53</scope>
    <scope>SUBCELLULAR LOCATION</scope>
    <scope>REGION</scope>
</reference>
<reference key="5">
    <citation type="journal article" date="2015" name="J. Virol.">
        <title>Identification of the Essential Role of Viral Bcl-2 for Kaposi's Sarcoma-Associated Herpesvirus Lytic Replication.</title>
        <authorList>
            <person name="Liang Q."/>
            <person name="Chang B."/>
            <person name="Lee P."/>
            <person name="Brulois K.F."/>
            <person name="Ge J."/>
            <person name="Shi M."/>
            <person name="Rodgers M.A."/>
            <person name="Feng P."/>
            <person name="Oh B.H."/>
            <person name="Liang C."/>
            <person name="Jung J.U."/>
        </authorList>
    </citation>
    <scope>FUNCTION</scope>
    <scope>MUTAGENESIS OF GLU-14</scope>
</reference>
<reference key="6">
    <citation type="journal article" date="2017" name="J. Virol.">
        <title>The viral Bcl-2 homologs of Kaposi's sarcoma-associated herpesvirus and rhesus rhadinovirus share an essential role for viral replication.</title>
        <authorList>
            <person name="Gallo A."/>
            <person name="Lampe M."/>
            <person name="Guenther T."/>
            <person name="Brune W."/>
        </authorList>
    </citation>
    <scope>FUNCTION</scope>
    <scope>SUBCELLULAR LOCATION</scope>
</reference>
<reference key="7">
    <citation type="journal article" date="2018" name="J. Virol.">
        <title>Novel Role of vBcl2 in the Virion Assembly of Kaposi's Sarcoma-Associated Herpesvirus.</title>
        <authorList>
            <person name="Liang Q."/>
            <person name="Wei D."/>
            <person name="Chung B."/>
            <person name="Brulois K.F."/>
            <person name="Guo C."/>
            <person name="Dong S."/>
            <person name="Gao S.J."/>
            <person name="Feng P."/>
            <person name="Liang C."/>
            <person name="Jung J.U."/>
        </authorList>
    </citation>
    <scope>FUNCTION</scope>
    <scope>INTERACTION WITH ORF55</scope>
</reference>
<protein>
    <recommendedName>
        <fullName>Apoptosis regulator Bcl-2 homolog</fullName>
    </recommendedName>
</protein>
<sequence>MDEDVLPGEVLAIEGIFMACGLNEPEYLYHPLLSPIKLYITGLMRDKESLFEAMLANVRFHSTTGINQLGLSMLQVSGDGNMNWGRALAILTFGSFVAQKLSNEPHLRDFALAVLPVYAYEAIGPQWFRARGGWRGLKAYCTQVLTRRRGRRMTALLGSIALLATILAAVAMSRR</sequence>
<feature type="chain" id="PRO_0000423772" description="Apoptosis regulator Bcl-2 homolog">
    <location>
        <begin position="1"/>
        <end position="175"/>
    </location>
</feature>
<feature type="transmembrane region" description="Helical" evidence="1">
    <location>
        <begin position="153"/>
        <end position="173"/>
    </location>
</feature>
<feature type="region of interest" description="Mediates interaction with human NOP53 and localization to host nucleolus" evidence="2">
    <location>
        <begin position="37"/>
        <end position="42"/>
    </location>
</feature>
<feature type="mutagenesis site" description="Complete loss of viral lytic replication." evidence="3">
    <original>E</original>
    <variation>A</variation>
    <location>
        <position position="14"/>
    </location>
</feature>
<keyword id="KW-1043">Host membrane</keyword>
<keyword id="KW-1045">Host mitochondrion</keyword>
<keyword id="KW-1048">Host nucleus</keyword>
<keyword id="KW-0945">Host-virus interaction</keyword>
<keyword id="KW-1081">Inhibition of host apoptosis by viral BCL2-like protein</keyword>
<keyword id="KW-0472">Membrane</keyword>
<keyword id="KW-1119">Modulation of host cell apoptosis by virus</keyword>
<keyword id="KW-1185">Reference proteome</keyword>
<keyword id="KW-0812">Transmembrane</keyword>
<keyword id="KW-1133">Transmembrane helix</keyword>
<gene>
    <name type="primary">vBCL2</name>
    <name type="ORF">ORF16</name>
</gene>
<organism>
    <name type="scientific">Human herpesvirus 8 type P (isolate GK18)</name>
    <name type="common">HHV-8</name>
    <name type="synonym">Kaposi's sarcoma-associated herpesvirus</name>
    <dbReference type="NCBI Taxonomy" id="868565"/>
    <lineage>
        <taxon>Viruses</taxon>
        <taxon>Duplodnaviria</taxon>
        <taxon>Heunggongvirae</taxon>
        <taxon>Peploviricota</taxon>
        <taxon>Herviviricetes</taxon>
        <taxon>Herpesvirales</taxon>
        <taxon>Orthoherpesviridae</taxon>
        <taxon>Gammaherpesvirinae</taxon>
        <taxon>Rhadinovirus</taxon>
        <taxon>Rhadinovirus humangamma8</taxon>
        <taxon>Human herpesvirus 8</taxon>
    </lineage>
</organism>
<comment type="function">
    <text evidence="3 4 5 6">Plays a role in the protection against apoptosis mediated by cytotoxic cells during the immune response to acute and persistent viral infection. Contributes therefore to latency establishment. Also plays a role in the inhibition of host starvation-induced autophagy which ultimately contributes to the viral chronic infection. Also participates in the viral genome replication within host nucleus (PubMed:28053098).</text>
</comment>
<comment type="subunit">
    <text evidence="2 5">Interacts with human NOP53; may sequester ORF16 in host nucleolus and reduce its antiapoptotic activity. Interacts with ORF55.</text>
</comment>
<comment type="subcellular location">
    <subcellularLocation>
        <location evidence="7">Host membrane</location>
        <topology evidence="7">Single-pass membrane protein</topology>
    </subcellularLocation>
    <subcellularLocation>
        <location evidence="2 4">Host mitochondrion</location>
    </subcellularLocation>
    <subcellularLocation>
        <location evidence="2">Host nucleus</location>
        <location evidence="2">Host nucleolus</location>
    </subcellularLocation>
    <subcellularLocation>
        <location evidence="4">Host nucleus</location>
    </subcellularLocation>
</comment>
<comment type="similarity">
    <text evidence="7">Belongs to the Bcl-2 family.</text>
</comment>
<accession>F5HGJ3</accession>
<evidence type="ECO:0000255" key="1"/>
<evidence type="ECO:0000269" key="2">
    <source>
    </source>
</evidence>
<evidence type="ECO:0000269" key="3">
    <source>
    </source>
</evidence>
<evidence type="ECO:0000269" key="4">
    <source>
    </source>
</evidence>
<evidence type="ECO:0000269" key="5">
    <source>
    </source>
</evidence>
<evidence type="ECO:0000269" key="6">
    <source>
    </source>
</evidence>
<evidence type="ECO:0000305" key="7"/>
<dbReference type="EMBL" id="AF148805">
    <property type="protein sequence ID" value="ABD28866.1"/>
    <property type="molecule type" value="Genomic_DNA"/>
</dbReference>
<dbReference type="RefSeq" id="YP_001129368.1">
    <property type="nucleotide sequence ID" value="NC_009333.1"/>
</dbReference>
<dbReference type="SMR" id="F5HGJ3"/>
<dbReference type="BioGRID" id="1776950">
    <property type="interactions" value="9"/>
</dbReference>
<dbReference type="DNASU" id="4961447"/>
<dbReference type="GeneID" id="4961447"/>
<dbReference type="KEGG" id="vg:4961447"/>
<dbReference type="Proteomes" id="UP000000942">
    <property type="component" value="Segment"/>
</dbReference>
<dbReference type="GO" id="GO:0033644">
    <property type="term" value="C:host cell membrane"/>
    <property type="evidence" value="ECO:0007669"/>
    <property type="project" value="UniProtKB-SubCell"/>
</dbReference>
<dbReference type="GO" id="GO:0033650">
    <property type="term" value="C:host cell mitochondrion"/>
    <property type="evidence" value="ECO:0000314"/>
    <property type="project" value="UniProtKB"/>
</dbReference>
<dbReference type="GO" id="GO:0044196">
    <property type="term" value="C:host cell nucleolus"/>
    <property type="evidence" value="ECO:0000314"/>
    <property type="project" value="UniProtKB"/>
</dbReference>
<dbReference type="GO" id="GO:0016020">
    <property type="term" value="C:membrane"/>
    <property type="evidence" value="ECO:0007669"/>
    <property type="project" value="UniProtKB-KW"/>
</dbReference>
<dbReference type="GO" id="GO:0042981">
    <property type="term" value="P:regulation of apoptotic process"/>
    <property type="evidence" value="ECO:0007669"/>
    <property type="project" value="InterPro"/>
</dbReference>
<dbReference type="GO" id="GO:0033668">
    <property type="term" value="P:symbiont-mediated suppression of host apoptosis"/>
    <property type="evidence" value="ECO:0000315"/>
    <property type="project" value="UniProtKB"/>
</dbReference>
<dbReference type="Gene3D" id="1.10.437.10">
    <property type="entry name" value="Blc2-like"/>
    <property type="match status" value="1"/>
</dbReference>
<dbReference type="InterPro" id="IPR036834">
    <property type="entry name" value="Bcl-2-like_sf"/>
</dbReference>
<dbReference type="InterPro" id="IPR046371">
    <property type="entry name" value="Bcl-2_BH1-3"/>
</dbReference>
<dbReference type="InterPro" id="IPR002475">
    <property type="entry name" value="Bcl2-like"/>
</dbReference>
<dbReference type="Pfam" id="PF00452">
    <property type="entry name" value="Bcl-2"/>
    <property type="match status" value="1"/>
</dbReference>
<dbReference type="SMART" id="SM00337">
    <property type="entry name" value="BCL"/>
    <property type="match status" value="1"/>
</dbReference>
<dbReference type="SUPFAM" id="SSF56854">
    <property type="entry name" value="Bcl-2 inhibitors of programmed cell death"/>
    <property type="match status" value="1"/>
</dbReference>
<dbReference type="PROSITE" id="PS50062">
    <property type="entry name" value="BCL2_FAMILY"/>
    <property type="match status" value="1"/>
</dbReference>
<proteinExistence type="evidence at protein level"/>